<keyword id="KW-0460">Magnesium</keyword>
<keyword id="KW-0479">Metal-binding</keyword>
<keyword id="KW-1185">Reference proteome</keyword>
<keyword id="KW-0784">Thiamine biosynthesis</keyword>
<keyword id="KW-0808">Transferase</keyword>
<comment type="function">
    <text evidence="1">Condenses 4-methyl-5-(beta-hydroxyethyl)thiazole monophosphate (THZ-P) and 2-methyl-4-amino-5-hydroxymethyl pyrimidine pyrophosphate (HMP-PP) to form thiamine monophosphate (TMP).</text>
</comment>
<comment type="catalytic activity">
    <reaction evidence="1">
        <text>2-[(2R,5Z)-2-carboxy-4-methylthiazol-5(2H)-ylidene]ethyl phosphate + 4-amino-2-methyl-5-(diphosphooxymethyl)pyrimidine + 2 H(+) = thiamine phosphate + CO2 + diphosphate</text>
        <dbReference type="Rhea" id="RHEA:47844"/>
        <dbReference type="ChEBI" id="CHEBI:15378"/>
        <dbReference type="ChEBI" id="CHEBI:16526"/>
        <dbReference type="ChEBI" id="CHEBI:33019"/>
        <dbReference type="ChEBI" id="CHEBI:37575"/>
        <dbReference type="ChEBI" id="CHEBI:57841"/>
        <dbReference type="ChEBI" id="CHEBI:62899"/>
        <dbReference type="EC" id="2.5.1.3"/>
    </reaction>
</comment>
<comment type="catalytic activity">
    <reaction evidence="1">
        <text>2-(2-carboxy-4-methylthiazol-5-yl)ethyl phosphate + 4-amino-2-methyl-5-(diphosphooxymethyl)pyrimidine + 2 H(+) = thiamine phosphate + CO2 + diphosphate</text>
        <dbReference type="Rhea" id="RHEA:47848"/>
        <dbReference type="ChEBI" id="CHEBI:15378"/>
        <dbReference type="ChEBI" id="CHEBI:16526"/>
        <dbReference type="ChEBI" id="CHEBI:33019"/>
        <dbReference type="ChEBI" id="CHEBI:37575"/>
        <dbReference type="ChEBI" id="CHEBI:57841"/>
        <dbReference type="ChEBI" id="CHEBI:62890"/>
        <dbReference type="EC" id="2.5.1.3"/>
    </reaction>
</comment>
<comment type="catalytic activity">
    <reaction evidence="1">
        <text>4-methyl-5-(2-phosphooxyethyl)-thiazole + 4-amino-2-methyl-5-(diphosphooxymethyl)pyrimidine + H(+) = thiamine phosphate + diphosphate</text>
        <dbReference type="Rhea" id="RHEA:22328"/>
        <dbReference type="ChEBI" id="CHEBI:15378"/>
        <dbReference type="ChEBI" id="CHEBI:33019"/>
        <dbReference type="ChEBI" id="CHEBI:37575"/>
        <dbReference type="ChEBI" id="CHEBI:57841"/>
        <dbReference type="ChEBI" id="CHEBI:58296"/>
        <dbReference type="EC" id="2.5.1.3"/>
    </reaction>
</comment>
<comment type="cofactor">
    <cofactor evidence="1">
        <name>Mg(2+)</name>
        <dbReference type="ChEBI" id="CHEBI:18420"/>
    </cofactor>
    <text evidence="1">Binds 1 Mg(2+) ion per subunit.</text>
</comment>
<comment type="pathway">
    <text evidence="1">Cofactor biosynthesis; thiamine diphosphate biosynthesis; thiamine phosphate from 4-amino-2-methyl-5-diphosphomethylpyrimidine and 4-methyl-5-(2-phosphoethyl)-thiazole: step 1/1.</text>
</comment>
<comment type="similarity">
    <text evidence="1">Belongs to the thiamine-phosphate synthase family.</text>
</comment>
<evidence type="ECO:0000255" key="1">
    <source>
        <dbReference type="HAMAP-Rule" id="MF_00097"/>
    </source>
</evidence>
<organism>
    <name type="scientific">Proteus mirabilis (strain HI4320)</name>
    <dbReference type="NCBI Taxonomy" id="529507"/>
    <lineage>
        <taxon>Bacteria</taxon>
        <taxon>Pseudomonadati</taxon>
        <taxon>Pseudomonadota</taxon>
        <taxon>Gammaproteobacteria</taxon>
        <taxon>Enterobacterales</taxon>
        <taxon>Morganellaceae</taxon>
        <taxon>Proteus</taxon>
    </lineage>
</organism>
<sequence>MNRSSNSAFAPTEKKLGLYPVVDSIEWVERLLKIGVTTIQLRIKDKQPKDVEQDIITAIKLGRKYNARLFINDYWQLAIKHHAYGVHLGQEDLDIADLDAIKQSGLCLGISTHNDTELQRAKRLLPSYIALGHIFPTTTKDMPSKPQGLRALKHQVEQTHDFPTVAIGGISLEKVSDVVATGVGGVALVSAITKASDWQQVTLKLLELVEGKPSC</sequence>
<dbReference type="EC" id="2.5.1.3" evidence="1"/>
<dbReference type="EMBL" id="AM942759">
    <property type="protein sequence ID" value="CAR45483.1"/>
    <property type="molecule type" value="Genomic_DNA"/>
</dbReference>
<dbReference type="RefSeq" id="WP_004249137.1">
    <property type="nucleotide sequence ID" value="NC_010554.1"/>
</dbReference>
<dbReference type="SMR" id="B4EYU2"/>
<dbReference type="EnsemblBacteria" id="CAR45483">
    <property type="protein sequence ID" value="CAR45483"/>
    <property type="gene ID" value="PMI2778"/>
</dbReference>
<dbReference type="GeneID" id="6803448"/>
<dbReference type="KEGG" id="pmr:PMI2778"/>
<dbReference type="PATRIC" id="fig|529507.6.peg.2709"/>
<dbReference type="eggNOG" id="COG0352">
    <property type="taxonomic scope" value="Bacteria"/>
</dbReference>
<dbReference type="HOGENOM" id="CLU_018272_3_3_6"/>
<dbReference type="UniPathway" id="UPA00060">
    <property type="reaction ID" value="UER00141"/>
</dbReference>
<dbReference type="Proteomes" id="UP000008319">
    <property type="component" value="Chromosome"/>
</dbReference>
<dbReference type="GO" id="GO:0005737">
    <property type="term" value="C:cytoplasm"/>
    <property type="evidence" value="ECO:0007669"/>
    <property type="project" value="TreeGrafter"/>
</dbReference>
<dbReference type="GO" id="GO:0000287">
    <property type="term" value="F:magnesium ion binding"/>
    <property type="evidence" value="ECO:0007669"/>
    <property type="project" value="UniProtKB-UniRule"/>
</dbReference>
<dbReference type="GO" id="GO:0004789">
    <property type="term" value="F:thiamine-phosphate diphosphorylase activity"/>
    <property type="evidence" value="ECO:0007669"/>
    <property type="project" value="UniProtKB-UniRule"/>
</dbReference>
<dbReference type="GO" id="GO:0009228">
    <property type="term" value="P:thiamine biosynthetic process"/>
    <property type="evidence" value="ECO:0007669"/>
    <property type="project" value="UniProtKB-KW"/>
</dbReference>
<dbReference type="GO" id="GO:0009229">
    <property type="term" value="P:thiamine diphosphate biosynthetic process"/>
    <property type="evidence" value="ECO:0007669"/>
    <property type="project" value="UniProtKB-UniRule"/>
</dbReference>
<dbReference type="CDD" id="cd00564">
    <property type="entry name" value="TMP_TenI"/>
    <property type="match status" value="1"/>
</dbReference>
<dbReference type="FunFam" id="3.20.20.70:FF:000064">
    <property type="entry name" value="Thiamine-phosphate synthase"/>
    <property type="match status" value="1"/>
</dbReference>
<dbReference type="Gene3D" id="3.20.20.70">
    <property type="entry name" value="Aldolase class I"/>
    <property type="match status" value="1"/>
</dbReference>
<dbReference type="HAMAP" id="MF_00097">
    <property type="entry name" value="TMP_synthase"/>
    <property type="match status" value="1"/>
</dbReference>
<dbReference type="InterPro" id="IPR013785">
    <property type="entry name" value="Aldolase_TIM"/>
</dbReference>
<dbReference type="InterPro" id="IPR036206">
    <property type="entry name" value="ThiamineP_synth_sf"/>
</dbReference>
<dbReference type="InterPro" id="IPR022998">
    <property type="entry name" value="ThiamineP_synth_TenI"/>
</dbReference>
<dbReference type="InterPro" id="IPR034291">
    <property type="entry name" value="TMP_synthase"/>
</dbReference>
<dbReference type="NCBIfam" id="NF002904">
    <property type="entry name" value="PRK03512.1"/>
    <property type="match status" value="1"/>
</dbReference>
<dbReference type="NCBIfam" id="TIGR00693">
    <property type="entry name" value="thiE"/>
    <property type="match status" value="1"/>
</dbReference>
<dbReference type="PANTHER" id="PTHR20857">
    <property type="entry name" value="THIAMINE-PHOSPHATE PYROPHOSPHORYLASE"/>
    <property type="match status" value="1"/>
</dbReference>
<dbReference type="PANTHER" id="PTHR20857:SF15">
    <property type="entry name" value="THIAMINE-PHOSPHATE SYNTHASE"/>
    <property type="match status" value="1"/>
</dbReference>
<dbReference type="Pfam" id="PF02581">
    <property type="entry name" value="TMP-TENI"/>
    <property type="match status" value="1"/>
</dbReference>
<dbReference type="SUPFAM" id="SSF51391">
    <property type="entry name" value="Thiamin phosphate synthase"/>
    <property type="match status" value="1"/>
</dbReference>
<proteinExistence type="inferred from homology"/>
<feature type="chain" id="PRO_1000093681" description="Thiamine-phosphate synthase">
    <location>
        <begin position="1"/>
        <end position="215"/>
    </location>
</feature>
<feature type="binding site" evidence="1">
    <location>
        <begin position="40"/>
        <end position="44"/>
    </location>
    <ligand>
        <name>4-amino-2-methyl-5-(diphosphooxymethyl)pyrimidine</name>
        <dbReference type="ChEBI" id="CHEBI:57841"/>
    </ligand>
</feature>
<feature type="binding site" evidence="1">
    <location>
        <position position="72"/>
    </location>
    <ligand>
        <name>4-amino-2-methyl-5-(diphosphooxymethyl)pyrimidine</name>
        <dbReference type="ChEBI" id="CHEBI:57841"/>
    </ligand>
</feature>
<feature type="binding site" evidence="1">
    <location>
        <position position="73"/>
    </location>
    <ligand>
        <name>Mg(2+)</name>
        <dbReference type="ChEBI" id="CHEBI:18420"/>
    </ligand>
</feature>
<feature type="binding site" evidence="1">
    <location>
        <position position="92"/>
    </location>
    <ligand>
        <name>Mg(2+)</name>
        <dbReference type="ChEBI" id="CHEBI:18420"/>
    </ligand>
</feature>
<feature type="binding site" evidence="1">
    <location>
        <position position="111"/>
    </location>
    <ligand>
        <name>4-amino-2-methyl-5-(diphosphooxymethyl)pyrimidine</name>
        <dbReference type="ChEBI" id="CHEBI:57841"/>
    </ligand>
</feature>
<feature type="binding site" evidence="1">
    <location>
        <begin position="137"/>
        <end position="139"/>
    </location>
    <ligand>
        <name>2-[(2R,5Z)-2-carboxy-4-methylthiazol-5(2H)-ylidene]ethyl phosphate</name>
        <dbReference type="ChEBI" id="CHEBI:62899"/>
    </ligand>
</feature>
<feature type="binding site" evidence="1">
    <location>
        <position position="140"/>
    </location>
    <ligand>
        <name>4-amino-2-methyl-5-(diphosphooxymethyl)pyrimidine</name>
        <dbReference type="ChEBI" id="CHEBI:57841"/>
    </ligand>
</feature>
<feature type="binding site" evidence="1">
    <location>
        <position position="169"/>
    </location>
    <ligand>
        <name>2-[(2R,5Z)-2-carboxy-4-methylthiazol-5(2H)-ylidene]ethyl phosphate</name>
        <dbReference type="ChEBI" id="CHEBI:62899"/>
    </ligand>
</feature>
<feature type="binding site" evidence="1">
    <location>
        <begin position="189"/>
        <end position="190"/>
    </location>
    <ligand>
        <name>2-[(2R,5Z)-2-carboxy-4-methylthiazol-5(2H)-ylidene]ethyl phosphate</name>
        <dbReference type="ChEBI" id="CHEBI:62899"/>
    </ligand>
</feature>
<gene>
    <name evidence="1" type="primary">thiE</name>
    <name type="ordered locus">PMI2778</name>
</gene>
<reference key="1">
    <citation type="journal article" date="2008" name="J. Bacteriol.">
        <title>Complete genome sequence of uropathogenic Proteus mirabilis, a master of both adherence and motility.</title>
        <authorList>
            <person name="Pearson M.M."/>
            <person name="Sebaihia M."/>
            <person name="Churcher C."/>
            <person name="Quail M.A."/>
            <person name="Seshasayee A.S."/>
            <person name="Luscombe N.M."/>
            <person name="Abdellah Z."/>
            <person name="Arrosmith C."/>
            <person name="Atkin B."/>
            <person name="Chillingworth T."/>
            <person name="Hauser H."/>
            <person name="Jagels K."/>
            <person name="Moule S."/>
            <person name="Mungall K."/>
            <person name="Norbertczak H."/>
            <person name="Rabbinowitsch E."/>
            <person name="Walker D."/>
            <person name="Whithead S."/>
            <person name="Thomson N.R."/>
            <person name="Rather P.N."/>
            <person name="Parkhill J."/>
            <person name="Mobley H.L.T."/>
        </authorList>
    </citation>
    <scope>NUCLEOTIDE SEQUENCE [LARGE SCALE GENOMIC DNA]</scope>
    <source>
        <strain>HI4320</strain>
    </source>
</reference>
<accession>B4EYU2</accession>
<protein>
    <recommendedName>
        <fullName evidence="1">Thiamine-phosphate synthase</fullName>
        <shortName evidence="1">TP synthase</shortName>
        <shortName evidence="1">TPS</shortName>
        <ecNumber evidence="1">2.5.1.3</ecNumber>
    </recommendedName>
    <alternativeName>
        <fullName evidence="1">Thiamine-phosphate pyrophosphorylase</fullName>
        <shortName evidence="1">TMP pyrophosphorylase</shortName>
        <shortName evidence="1">TMP-PPase</shortName>
    </alternativeName>
</protein>
<name>THIE_PROMH</name>